<proteinExistence type="inferred from homology"/>
<comment type="catalytic activity">
    <reaction evidence="1">
        <text>tRNA(Asn) + L-asparagine + ATP = L-asparaginyl-tRNA(Asn) + AMP + diphosphate + H(+)</text>
        <dbReference type="Rhea" id="RHEA:11180"/>
        <dbReference type="Rhea" id="RHEA-COMP:9659"/>
        <dbReference type="Rhea" id="RHEA-COMP:9674"/>
        <dbReference type="ChEBI" id="CHEBI:15378"/>
        <dbReference type="ChEBI" id="CHEBI:30616"/>
        <dbReference type="ChEBI" id="CHEBI:33019"/>
        <dbReference type="ChEBI" id="CHEBI:58048"/>
        <dbReference type="ChEBI" id="CHEBI:78442"/>
        <dbReference type="ChEBI" id="CHEBI:78515"/>
        <dbReference type="ChEBI" id="CHEBI:456215"/>
        <dbReference type="EC" id="6.1.1.22"/>
    </reaction>
</comment>
<comment type="subunit">
    <text evidence="1">Homodimer.</text>
</comment>
<comment type="subcellular location">
    <subcellularLocation>
        <location evidence="1">Cytoplasm</location>
    </subcellularLocation>
</comment>
<comment type="similarity">
    <text evidence="1">Belongs to the class-II aminoacyl-tRNA synthetase family.</text>
</comment>
<keyword id="KW-0030">Aminoacyl-tRNA synthetase</keyword>
<keyword id="KW-0067">ATP-binding</keyword>
<keyword id="KW-0963">Cytoplasm</keyword>
<keyword id="KW-0436">Ligase</keyword>
<keyword id="KW-0547">Nucleotide-binding</keyword>
<keyword id="KW-0648">Protein biosynthesis</keyword>
<keyword id="KW-1185">Reference proteome</keyword>
<sequence>MGETKVIRIEDVSKFVGQTVKIGVWLRQKRGSGKIAFLQLRDGTGFMQGVVSVGDVDEATFKLAEHLKQESSFYVTGEIHQDSRSEFGFEMAVSDIEIVGESEDYPITPKEHGTDFLFDERHLYLRHQKPFATMKIRDEIIRAIYDFFHKDGFLKLDSPIITDSAPEGTTELFPVKYFDKDAYLSQTGQLYAEAGAMAFGKVYDFGPTFRAEKSSTRRHLTEFWMIDAEMAWMHQEDSLKVQERFIAYLIERVVDNCQVELKMLGRDVEKLRAYTKLPYPRISYDDAVKLLQDNDFKIEWGVDFGSPEETFLAKRFNSPFFIVNFPKAIKAFYMKRPPSRDDVVISADMLAPEGYGEIIGGSERDTDYDYLKQQIISQHLDLSEYSWYLDLRKYGTVPHSGFGLGLERLIRFIAGEDHIRETIPFPRTLNRLHP</sequence>
<reference key="1">
    <citation type="journal article" date="2006" name="Proc. Natl. Acad. Sci. U.S.A.">
        <title>Comparative genomics of the lactic acid bacteria.</title>
        <authorList>
            <person name="Makarova K.S."/>
            <person name="Slesarev A."/>
            <person name="Wolf Y.I."/>
            <person name="Sorokin A."/>
            <person name="Mirkin B."/>
            <person name="Koonin E.V."/>
            <person name="Pavlov A."/>
            <person name="Pavlova N."/>
            <person name="Karamychev V."/>
            <person name="Polouchine N."/>
            <person name="Shakhova V."/>
            <person name="Grigoriev I."/>
            <person name="Lou Y."/>
            <person name="Rohksar D."/>
            <person name="Lucas S."/>
            <person name="Huang K."/>
            <person name="Goodstein D.M."/>
            <person name="Hawkins T."/>
            <person name="Plengvidhya V."/>
            <person name="Welker D."/>
            <person name="Hughes J."/>
            <person name="Goh Y."/>
            <person name="Benson A."/>
            <person name="Baldwin K."/>
            <person name="Lee J.-H."/>
            <person name="Diaz-Muniz I."/>
            <person name="Dosti B."/>
            <person name="Smeianov V."/>
            <person name="Wechter W."/>
            <person name="Barabote R."/>
            <person name="Lorca G."/>
            <person name="Altermann E."/>
            <person name="Barrangou R."/>
            <person name="Ganesan B."/>
            <person name="Xie Y."/>
            <person name="Rawsthorne H."/>
            <person name="Tamir D."/>
            <person name="Parker C."/>
            <person name="Breidt F."/>
            <person name="Broadbent J.R."/>
            <person name="Hutkins R."/>
            <person name="O'Sullivan D."/>
            <person name="Steele J."/>
            <person name="Unlu G."/>
            <person name="Saier M.H. Jr."/>
            <person name="Klaenhammer T."/>
            <person name="Richardson P."/>
            <person name="Kozyavkin S."/>
            <person name="Weimer B.C."/>
            <person name="Mills D.A."/>
        </authorList>
    </citation>
    <scope>NUCLEOTIDE SEQUENCE [LARGE SCALE GENOMIC DNA]</scope>
    <source>
        <strain>ATCC BAA-331 / PSU-1</strain>
    </source>
</reference>
<feature type="chain" id="PRO_1000128213" description="Asparagine--tRNA ligase">
    <location>
        <begin position="1"/>
        <end position="434"/>
    </location>
</feature>
<organism>
    <name type="scientific">Oenococcus oeni (strain ATCC BAA-331 / PSU-1)</name>
    <dbReference type="NCBI Taxonomy" id="203123"/>
    <lineage>
        <taxon>Bacteria</taxon>
        <taxon>Bacillati</taxon>
        <taxon>Bacillota</taxon>
        <taxon>Bacilli</taxon>
        <taxon>Lactobacillales</taxon>
        <taxon>Lactobacillaceae</taxon>
        <taxon>Oenococcus</taxon>
    </lineage>
</organism>
<name>SYN_OENOB</name>
<evidence type="ECO:0000255" key="1">
    <source>
        <dbReference type="HAMAP-Rule" id="MF_00534"/>
    </source>
</evidence>
<accession>Q04EX6</accession>
<protein>
    <recommendedName>
        <fullName evidence="1">Asparagine--tRNA ligase</fullName>
        <ecNumber evidence="1">6.1.1.22</ecNumber>
    </recommendedName>
    <alternativeName>
        <fullName evidence="1">Asparaginyl-tRNA synthetase</fullName>
        <shortName evidence="1">AsnRS</shortName>
    </alternativeName>
</protein>
<gene>
    <name evidence="1" type="primary">asnS</name>
    <name type="ordered locus">OEOE_1097</name>
</gene>
<dbReference type="EC" id="6.1.1.22" evidence="1"/>
<dbReference type="EMBL" id="CP000411">
    <property type="protein sequence ID" value="ABJ56996.1"/>
    <property type="molecule type" value="Genomic_DNA"/>
</dbReference>
<dbReference type="RefSeq" id="WP_002823231.1">
    <property type="nucleotide sequence ID" value="NC_008528.1"/>
</dbReference>
<dbReference type="SMR" id="Q04EX6"/>
<dbReference type="STRING" id="203123.OEOE_1097"/>
<dbReference type="KEGG" id="ooe:OEOE_1097"/>
<dbReference type="PATRIC" id="fig|203123.7.peg.1119"/>
<dbReference type="eggNOG" id="COG0017">
    <property type="taxonomic scope" value="Bacteria"/>
</dbReference>
<dbReference type="HOGENOM" id="CLU_004553_2_0_9"/>
<dbReference type="Proteomes" id="UP000000774">
    <property type="component" value="Chromosome"/>
</dbReference>
<dbReference type="GO" id="GO:0005737">
    <property type="term" value="C:cytoplasm"/>
    <property type="evidence" value="ECO:0007669"/>
    <property type="project" value="UniProtKB-SubCell"/>
</dbReference>
<dbReference type="GO" id="GO:0004816">
    <property type="term" value="F:asparagine-tRNA ligase activity"/>
    <property type="evidence" value="ECO:0007669"/>
    <property type="project" value="UniProtKB-UniRule"/>
</dbReference>
<dbReference type="GO" id="GO:0005524">
    <property type="term" value="F:ATP binding"/>
    <property type="evidence" value="ECO:0007669"/>
    <property type="project" value="UniProtKB-UniRule"/>
</dbReference>
<dbReference type="GO" id="GO:0140096">
    <property type="term" value="F:catalytic activity, acting on a protein"/>
    <property type="evidence" value="ECO:0007669"/>
    <property type="project" value="UniProtKB-ARBA"/>
</dbReference>
<dbReference type="GO" id="GO:0003676">
    <property type="term" value="F:nucleic acid binding"/>
    <property type="evidence" value="ECO:0007669"/>
    <property type="project" value="InterPro"/>
</dbReference>
<dbReference type="GO" id="GO:0016740">
    <property type="term" value="F:transferase activity"/>
    <property type="evidence" value="ECO:0007669"/>
    <property type="project" value="UniProtKB-ARBA"/>
</dbReference>
<dbReference type="GO" id="GO:0006421">
    <property type="term" value="P:asparaginyl-tRNA aminoacylation"/>
    <property type="evidence" value="ECO:0007669"/>
    <property type="project" value="UniProtKB-UniRule"/>
</dbReference>
<dbReference type="CDD" id="cd04323">
    <property type="entry name" value="AsnRS_cyto_like_N"/>
    <property type="match status" value="1"/>
</dbReference>
<dbReference type="CDD" id="cd00776">
    <property type="entry name" value="AsxRS_core"/>
    <property type="match status" value="1"/>
</dbReference>
<dbReference type="Gene3D" id="3.30.930.10">
    <property type="entry name" value="Bira Bifunctional Protein, Domain 2"/>
    <property type="match status" value="1"/>
</dbReference>
<dbReference type="Gene3D" id="2.40.50.140">
    <property type="entry name" value="Nucleic acid-binding proteins"/>
    <property type="match status" value="1"/>
</dbReference>
<dbReference type="HAMAP" id="MF_00534">
    <property type="entry name" value="Asn_tRNA_synth"/>
    <property type="match status" value="1"/>
</dbReference>
<dbReference type="InterPro" id="IPR004364">
    <property type="entry name" value="Aa-tRNA-synt_II"/>
</dbReference>
<dbReference type="InterPro" id="IPR006195">
    <property type="entry name" value="aa-tRNA-synth_II"/>
</dbReference>
<dbReference type="InterPro" id="IPR045864">
    <property type="entry name" value="aa-tRNA-synth_II/BPL/LPL"/>
</dbReference>
<dbReference type="InterPro" id="IPR004522">
    <property type="entry name" value="Asn-tRNA-ligase"/>
</dbReference>
<dbReference type="InterPro" id="IPR002312">
    <property type="entry name" value="Asp/Asn-tRNA-synth_IIb"/>
</dbReference>
<dbReference type="InterPro" id="IPR012340">
    <property type="entry name" value="NA-bd_OB-fold"/>
</dbReference>
<dbReference type="InterPro" id="IPR004365">
    <property type="entry name" value="NA-bd_OB_tRNA"/>
</dbReference>
<dbReference type="NCBIfam" id="TIGR00457">
    <property type="entry name" value="asnS"/>
    <property type="match status" value="1"/>
</dbReference>
<dbReference type="NCBIfam" id="NF003037">
    <property type="entry name" value="PRK03932.1"/>
    <property type="match status" value="1"/>
</dbReference>
<dbReference type="PANTHER" id="PTHR22594:SF34">
    <property type="entry name" value="ASPARAGINE--TRNA LIGASE, MITOCHONDRIAL-RELATED"/>
    <property type="match status" value="1"/>
</dbReference>
<dbReference type="PANTHER" id="PTHR22594">
    <property type="entry name" value="ASPARTYL/LYSYL-TRNA SYNTHETASE"/>
    <property type="match status" value="1"/>
</dbReference>
<dbReference type="Pfam" id="PF00152">
    <property type="entry name" value="tRNA-synt_2"/>
    <property type="match status" value="1"/>
</dbReference>
<dbReference type="Pfam" id="PF01336">
    <property type="entry name" value="tRNA_anti-codon"/>
    <property type="match status" value="1"/>
</dbReference>
<dbReference type="PRINTS" id="PR01042">
    <property type="entry name" value="TRNASYNTHASP"/>
</dbReference>
<dbReference type="SUPFAM" id="SSF55681">
    <property type="entry name" value="Class II aaRS and biotin synthetases"/>
    <property type="match status" value="1"/>
</dbReference>
<dbReference type="SUPFAM" id="SSF50249">
    <property type="entry name" value="Nucleic acid-binding proteins"/>
    <property type="match status" value="1"/>
</dbReference>
<dbReference type="PROSITE" id="PS50862">
    <property type="entry name" value="AA_TRNA_LIGASE_II"/>
    <property type="match status" value="1"/>
</dbReference>